<comment type="function">
    <text evidence="1">Functions in the biosynthesis of branched-chain amino acids. Catalyzes the dehydration of (2R,3R)-2,3-dihydroxy-3-methylpentanoate (2,3-dihydroxy-3-methylvalerate) into 2-oxo-3-methylpentanoate (2-oxo-3-methylvalerate) and of (2R)-2,3-dihydroxy-3-methylbutanoate (2,3-dihydroxyisovalerate) into 2-oxo-3-methylbutanoate (2-oxoisovalerate), the penultimate precursor to L-isoleucine and L-valine, respectively.</text>
</comment>
<comment type="catalytic activity">
    <reaction evidence="1">
        <text>(2R)-2,3-dihydroxy-3-methylbutanoate = 3-methyl-2-oxobutanoate + H2O</text>
        <dbReference type="Rhea" id="RHEA:24809"/>
        <dbReference type="ChEBI" id="CHEBI:11851"/>
        <dbReference type="ChEBI" id="CHEBI:15377"/>
        <dbReference type="ChEBI" id="CHEBI:49072"/>
        <dbReference type="EC" id="4.2.1.9"/>
    </reaction>
    <physiologicalReaction direction="left-to-right" evidence="1">
        <dbReference type="Rhea" id="RHEA:24810"/>
    </physiologicalReaction>
</comment>
<comment type="catalytic activity">
    <reaction evidence="1">
        <text>(2R,3R)-2,3-dihydroxy-3-methylpentanoate = (S)-3-methyl-2-oxopentanoate + H2O</text>
        <dbReference type="Rhea" id="RHEA:27694"/>
        <dbReference type="ChEBI" id="CHEBI:15377"/>
        <dbReference type="ChEBI" id="CHEBI:35146"/>
        <dbReference type="ChEBI" id="CHEBI:49258"/>
        <dbReference type="EC" id="4.2.1.9"/>
    </reaction>
    <physiologicalReaction direction="left-to-right" evidence="1">
        <dbReference type="Rhea" id="RHEA:27695"/>
    </physiologicalReaction>
</comment>
<comment type="cofactor">
    <cofactor evidence="1">
        <name>[2Fe-2S] cluster</name>
        <dbReference type="ChEBI" id="CHEBI:190135"/>
    </cofactor>
    <text evidence="1">Binds 1 [2Fe-2S] cluster per subunit. This cluster acts as a Lewis acid cofactor.</text>
</comment>
<comment type="cofactor">
    <cofactor evidence="1">
        <name>Mg(2+)</name>
        <dbReference type="ChEBI" id="CHEBI:18420"/>
    </cofactor>
</comment>
<comment type="pathway">
    <text evidence="1">Amino-acid biosynthesis; L-isoleucine biosynthesis; L-isoleucine from 2-oxobutanoate: step 3/4.</text>
</comment>
<comment type="pathway">
    <text evidence="1">Amino-acid biosynthesis; L-valine biosynthesis; L-valine from pyruvate: step 3/4.</text>
</comment>
<comment type="subunit">
    <text evidence="1">Homodimer.</text>
</comment>
<comment type="similarity">
    <text evidence="1">Belongs to the IlvD/Edd family.</text>
</comment>
<feature type="chain" id="PRO_1000000953" description="Dihydroxy-acid dehydratase">
    <location>
        <begin position="1"/>
        <end position="613"/>
    </location>
</feature>
<feature type="active site" description="Proton acceptor" evidence="1">
    <location>
        <position position="517"/>
    </location>
</feature>
<feature type="binding site" evidence="1">
    <location>
        <position position="81"/>
    </location>
    <ligand>
        <name>Mg(2+)</name>
        <dbReference type="ChEBI" id="CHEBI:18420"/>
    </ligand>
</feature>
<feature type="binding site" evidence="1">
    <location>
        <position position="122"/>
    </location>
    <ligand>
        <name>[2Fe-2S] cluster</name>
        <dbReference type="ChEBI" id="CHEBI:190135"/>
    </ligand>
</feature>
<feature type="binding site" evidence="1">
    <location>
        <position position="123"/>
    </location>
    <ligand>
        <name>Mg(2+)</name>
        <dbReference type="ChEBI" id="CHEBI:18420"/>
    </ligand>
</feature>
<feature type="binding site" description="via carbamate group" evidence="1">
    <location>
        <position position="124"/>
    </location>
    <ligand>
        <name>Mg(2+)</name>
        <dbReference type="ChEBI" id="CHEBI:18420"/>
    </ligand>
</feature>
<feature type="binding site" evidence="1">
    <location>
        <position position="195"/>
    </location>
    <ligand>
        <name>[2Fe-2S] cluster</name>
        <dbReference type="ChEBI" id="CHEBI:190135"/>
    </ligand>
</feature>
<feature type="binding site" evidence="1">
    <location>
        <position position="491"/>
    </location>
    <ligand>
        <name>Mg(2+)</name>
        <dbReference type="ChEBI" id="CHEBI:18420"/>
    </ligand>
</feature>
<feature type="modified residue" description="N6-carboxylysine" evidence="1">
    <location>
        <position position="124"/>
    </location>
</feature>
<sequence>MPKLRSATTTHGRNMAGARALWRATGMTDEDFGKPIIAVVNSFTQFVPGHVHLKDLGQLVAREIEAAGGVAKEFNTIAVDDGIAMGHGGMLYSLPSRELIADSVEYMVNAHCADAMVCISNCDKITPGMLMAALRINIPVIFVSGGPMEAGKTKLSDQIIKLDLVDAMIQGADPKVSDAQSEQVERSACPTCGSCSGMFTANSMNCLTEALGLSQPGNGSMLATHADREQLFKLAGQRIVTLAKRYYQQDDESALPRNIATKAAFENAMALDIAMGGSTNTVLHLLAAAQEAGVDFTMADIDRMSRKVPQLCKVAPSTQKYHMEDVHRAGGVVAILGQLEKAGLVHGDTRTVLGGSLAELLNEYDVSRQPSQEVVDFYRAGPAGIRTTKAFSQDCRWPELDVDRAEGCIRSLEHAYSLEGGLAVLSGNLALDGAIVKTAGVDDEHLCFRGPARVFESQDTAVAGILDGTVKAGEVVVIRYEGPKGGPGMQEMLYPTTYLKSMGLGKQCALITDGRFSGGTSGLSIGHVSPEAASGGTIGLVADGDIININIPARSMVLEVADSVLAARRVAVEARGWKPLDRQRQVSFALRAYAMLATSADKGAVRDRSKLEE</sequence>
<proteinExistence type="inferred from homology"/>
<evidence type="ECO:0000255" key="1">
    <source>
        <dbReference type="HAMAP-Rule" id="MF_00012"/>
    </source>
</evidence>
<reference key="1">
    <citation type="journal article" date="2008" name="BMC Genomics">
        <title>The genome of Aeromonas salmonicida subsp. salmonicida A449: insights into the evolution of a fish pathogen.</title>
        <authorList>
            <person name="Reith M.E."/>
            <person name="Singh R.K."/>
            <person name="Curtis B."/>
            <person name="Boyd J.M."/>
            <person name="Bouevitch A."/>
            <person name="Kimball J."/>
            <person name="Munholland J."/>
            <person name="Murphy C."/>
            <person name="Sarty D."/>
            <person name="Williams J."/>
            <person name="Nash J.H."/>
            <person name="Johnson S.C."/>
            <person name="Brown L.L."/>
        </authorList>
    </citation>
    <scope>NUCLEOTIDE SEQUENCE [LARGE SCALE GENOMIC DNA]</scope>
    <source>
        <strain>A449</strain>
    </source>
</reference>
<organism>
    <name type="scientific">Aeromonas salmonicida (strain A449)</name>
    <dbReference type="NCBI Taxonomy" id="382245"/>
    <lineage>
        <taxon>Bacteria</taxon>
        <taxon>Pseudomonadati</taxon>
        <taxon>Pseudomonadota</taxon>
        <taxon>Gammaproteobacteria</taxon>
        <taxon>Aeromonadales</taxon>
        <taxon>Aeromonadaceae</taxon>
        <taxon>Aeromonas</taxon>
    </lineage>
</organism>
<protein>
    <recommendedName>
        <fullName evidence="1">Dihydroxy-acid dehydratase</fullName>
        <shortName evidence="1">DAD</shortName>
        <ecNumber evidence="1">4.2.1.9</ecNumber>
    </recommendedName>
</protein>
<keyword id="KW-0001">2Fe-2S</keyword>
<keyword id="KW-0028">Amino-acid biosynthesis</keyword>
<keyword id="KW-0100">Branched-chain amino acid biosynthesis</keyword>
<keyword id="KW-0408">Iron</keyword>
<keyword id="KW-0411">Iron-sulfur</keyword>
<keyword id="KW-0456">Lyase</keyword>
<keyword id="KW-0460">Magnesium</keyword>
<keyword id="KW-0479">Metal-binding</keyword>
<accession>A4SHE9</accession>
<dbReference type="EC" id="4.2.1.9" evidence="1"/>
<dbReference type="EMBL" id="CP000644">
    <property type="protein sequence ID" value="ABO88321.1"/>
    <property type="molecule type" value="Genomic_DNA"/>
</dbReference>
<dbReference type="RefSeq" id="WP_005318219.1">
    <property type="nucleotide sequence ID" value="NC_009348.1"/>
</dbReference>
<dbReference type="SMR" id="A4SHE9"/>
<dbReference type="STRING" id="29491.GCA_000820065_04118"/>
<dbReference type="KEGG" id="asa:ASA_0122"/>
<dbReference type="eggNOG" id="COG0129">
    <property type="taxonomic scope" value="Bacteria"/>
</dbReference>
<dbReference type="HOGENOM" id="CLU_014271_4_2_6"/>
<dbReference type="UniPathway" id="UPA00047">
    <property type="reaction ID" value="UER00057"/>
</dbReference>
<dbReference type="UniPathway" id="UPA00049">
    <property type="reaction ID" value="UER00061"/>
</dbReference>
<dbReference type="Proteomes" id="UP000000225">
    <property type="component" value="Chromosome"/>
</dbReference>
<dbReference type="GO" id="GO:0005829">
    <property type="term" value="C:cytosol"/>
    <property type="evidence" value="ECO:0007669"/>
    <property type="project" value="TreeGrafter"/>
</dbReference>
<dbReference type="GO" id="GO:0051537">
    <property type="term" value="F:2 iron, 2 sulfur cluster binding"/>
    <property type="evidence" value="ECO:0007669"/>
    <property type="project" value="UniProtKB-UniRule"/>
</dbReference>
<dbReference type="GO" id="GO:0004160">
    <property type="term" value="F:dihydroxy-acid dehydratase activity"/>
    <property type="evidence" value="ECO:0007669"/>
    <property type="project" value="UniProtKB-UniRule"/>
</dbReference>
<dbReference type="GO" id="GO:0000287">
    <property type="term" value="F:magnesium ion binding"/>
    <property type="evidence" value="ECO:0007669"/>
    <property type="project" value="UniProtKB-UniRule"/>
</dbReference>
<dbReference type="GO" id="GO:0009097">
    <property type="term" value="P:isoleucine biosynthetic process"/>
    <property type="evidence" value="ECO:0007669"/>
    <property type="project" value="UniProtKB-UniRule"/>
</dbReference>
<dbReference type="GO" id="GO:0009099">
    <property type="term" value="P:L-valine biosynthetic process"/>
    <property type="evidence" value="ECO:0007669"/>
    <property type="project" value="UniProtKB-UniRule"/>
</dbReference>
<dbReference type="FunFam" id="3.50.30.80:FF:000001">
    <property type="entry name" value="Dihydroxy-acid dehydratase"/>
    <property type="match status" value="1"/>
</dbReference>
<dbReference type="Gene3D" id="3.50.30.80">
    <property type="entry name" value="IlvD/EDD C-terminal domain-like"/>
    <property type="match status" value="1"/>
</dbReference>
<dbReference type="HAMAP" id="MF_00012">
    <property type="entry name" value="IlvD"/>
    <property type="match status" value="1"/>
</dbReference>
<dbReference type="InterPro" id="IPR042096">
    <property type="entry name" value="Dihydro-acid_dehy_C"/>
</dbReference>
<dbReference type="InterPro" id="IPR004404">
    <property type="entry name" value="DihydroxyA_deHydtase"/>
</dbReference>
<dbReference type="InterPro" id="IPR020558">
    <property type="entry name" value="DiOHA_6PGluconate_deHydtase_CS"/>
</dbReference>
<dbReference type="InterPro" id="IPR056740">
    <property type="entry name" value="ILV_EDD_C"/>
</dbReference>
<dbReference type="InterPro" id="IPR000581">
    <property type="entry name" value="ILV_EDD_N"/>
</dbReference>
<dbReference type="InterPro" id="IPR037237">
    <property type="entry name" value="IlvD/EDD_N"/>
</dbReference>
<dbReference type="NCBIfam" id="TIGR00110">
    <property type="entry name" value="ilvD"/>
    <property type="match status" value="1"/>
</dbReference>
<dbReference type="NCBIfam" id="NF009103">
    <property type="entry name" value="PRK12448.1"/>
    <property type="match status" value="1"/>
</dbReference>
<dbReference type="PANTHER" id="PTHR43661">
    <property type="entry name" value="D-XYLONATE DEHYDRATASE"/>
    <property type="match status" value="1"/>
</dbReference>
<dbReference type="PANTHER" id="PTHR43661:SF3">
    <property type="entry name" value="D-XYLONATE DEHYDRATASE YAGF-RELATED"/>
    <property type="match status" value="1"/>
</dbReference>
<dbReference type="Pfam" id="PF24877">
    <property type="entry name" value="ILV_EDD_C"/>
    <property type="match status" value="1"/>
</dbReference>
<dbReference type="Pfam" id="PF00920">
    <property type="entry name" value="ILVD_EDD_N"/>
    <property type="match status" value="1"/>
</dbReference>
<dbReference type="SUPFAM" id="SSF143975">
    <property type="entry name" value="IlvD/EDD N-terminal domain-like"/>
    <property type="match status" value="1"/>
</dbReference>
<dbReference type="SUPFAM" id="SSF52016">
    <property type="entry name" value="LeuD/IlvD-like"/>
    <property type="match status" value="1"/>
</dbReference>
<dbReference type="PROSITE" id="PS00886">
    <property type="entry name" value="ILVD_EDD_1"/>
    <property type="match status" value="1"/>
</dbReference>
<dbReference type="PROSITE" id="PS00887">
    <property type="entry name" value="ILVD_EDD_2"/>
    <property type="match status" value="1"/>
</dbReference>
<gene>
    <name evidence="1" type="primary">ilvD</name>
    <name type="ordered locus">ASA_0122</name>
</gene>
<name>ILVD_AERS4</name>